<proteinExistence type="evidence at transcript level"/>
<reference key="1">
    <citation type="journal article" date="1996" name="Yeast">
        <title>A Candida albicans gene encoding a DNA ligase.</title>
        <authorList>
            <person name="Andaluz E."/>
            <person name="Larriba G."/>
            <person name="Calderone R."/>
        </authorList>
    </citation>
    <scope>NUCLEOTIDE SEQUENCE [GENOMIC DNA]</scope>
    <source>
        <strain>ATCC 56884 / 366</strain>
    </source>
</reference>
<reference key="2">
    <citation type="submission" date="2000-04" db="EMBL/GenBank/DDBJ databases">
        <authorList>
            <person name="Larriba G."/>
        </authorList>
    </citation>
    <scope>SEQUENCE REVISION TO C-TERMINUS</scope>
</reference>
<reference key="3">
    <citation type="journal article" date="2004" name="Proc. Natl. Acad. Sci. U.S.A.">
        <title>The diploid genome sequence of Candida albicans.</title>
        <authorList>
            <person name="Jones T."/>
            <person name="Federspiel N.A."/>
            <person name="Chibana H."/>
            <person name="Dungan J."/>
            <person name="Kalman S."/>
            <person name="Magee B.B."/>
            <person name="Newport G."/>
            <person name="Thorstenson Y.R."/>
            <person name="Agabian N."/>
            <person name="Magee P.T."/>
            <person name="Davis R.W."/>
            <person name="Scherer S."/>
        </authorList>
    </citation>
    <scope>NUCLEOTIDE SEQUENCE [LARGE SCALE GENOMIC DNA]</scope>
    <source>
        <strain>SC5314 / ATCC MYA-2876</strain>
    </source>
</reference>
<reference key="4">
    <citation type="journal article" date="2007" name="Genome Biol.">
        <title>Assembly of the Candida albicans genome into sixteen supercontigs aligned on the eight chromosomes.</title>
        <authorList>
            <person name="van het Hoog M."/>
            <person name="Rast T.J."/>
            <person name="Martchenko M."/>
            <person name="Grindle S."/>
            <person name="Dignard D."/>
            <person name="Hogues H."/>
            <person name="Cuomo C."/>
            <person name="Berriman M."/>
            <person name="Scherer S."/>
            <person name="Magee B.B."/>
            <person name="Whiteway M."/>
            <person name="Chibana H."/>
            <person name="Nantel A."/>
            <person name="Magee P.T."/>
        </authorList>
    </citation>
    <scope>GENOME REANNOTATION</scope>
    <source>
        <strain>SC5314 / ATCC MYA-2876</strain>
    </source>
</reference>
<reference key="5">
    <citation type="journal article" date="2013" name="Genome Biol.">
        <title>Assembly of a phased diploid Candida albicans genome facilitates allele-specific measurements and provides a simple model for repeat and indel structure.</title>
        <authorList>
            <person name="Muzzey D."/>
            <person name="Schwartz K."/>
            <person name="Weissman J.S."/>
            <person name="Sherlock G."/>
        </authorList>
    </citation>
    <scope>NUCLEOTIDE SEQUENCE [LARGE SCALE GENOMIC DNA]</scope>
    <scope>GENOME REANNOTATION</scope>
    <source>
        <strain>SC5314 / ATCC MYA-2876</strain>
    </source>
</reference>
<reference key="6">
    <citation type="journal article" date="1999" name="Yeast">
        <title>Cell cycle regulation of a DNA ligase-encoding gene (CaLIG4) from Candida albicans.</title>
        <authorList>
            <person name="Andaluz E."/>
            <person name="Ciudad A."/>
            <person name="Rubio Coque J."/>
            <person name="Calderone R."/>
            <person name="Larriba G."/>
        </authorList>
    </citation>
    <scope>FUNCTION</scope>
    <scope>INDUCTION</scope>
</reference>
<reference key="7">
    <citation type="journal article" date="2001" name="Infect. Immun.">
        <title>Phenotypic analysis and virulence of Candida albicans LIG4 mutants.</title>
        <authorList>
            <person name="Andaluz E."/>
            <person name="Calderone R."/>
            <person name="Reyes G."/>
            <person name="Larriba G."/>
        </authorList>
    </citation>
    <scope>FUNCTION</scope>
</reference>
<reference key="8">
    <citation type="journal article" date="2002" name="FEMS Yeast Res.">
        <title>An evaluation of the role of LIG4 in genomic instability and adaptive mutagenesis in Candida albicans.</title>
        <authorList>
            <person name="Andaluz E."/>
            <person name="Ciudad T."/>
            <person name="Larriba G."/>
        </authorList>
    </citation>
    <scope>FUNCTION</scope>
</reference>
<feature type="chain" id="PRO_0000059584" description="DNA ligase 4">
    <location>
        <begin position="1"/>
        <end position="928"/>
    </location>
</feature>
<feature type="domain" description="BRCT 1" evidence="4">
    <location>
        <begin position="673"/>
        <end position="769"/>
    </location>
</feature>
<feature type="domain" description="BRCT 2" evidence="4">
    <location>
        <begin position="821"/>
        <end position="927"/>
    </location>
</feature>
<feature type="active site" description="N6-AMP-lysine intermediate" evidence="5">
    <location>
        <position position="304"/>
    </location>
</feature>
<feature type="binding site" evidence="1">
    <location>
        <position position="302"/>
    </location>
    <ligand>
        <name>ATP</name>
        <dbReference type="ChEBI" id="CHEBI:30616"/>
    </ligand>
</feature>
<feature type="binding site" evidence="1">
    <location>
        <position position="304"/>
    </location>
    <ligand>
        <name>ATP</name>
        <dbReference type="ChEBI" id="CHEBI:30616"/>
    </ligand>
</feature>
<feature type="binding site" evidence="1">
    <location>
        <position position="309"/>
    </location>
    <ligand>
        <name>ATP</name>
        <dbReference type="ChEBI" id="CHEBI:30616"/>
    </ligand>
</feature>
<feature type="binding site" evidence="1">
    <location>
        <position position="362"/>
    </location>
    <ligand>
        <name>ATP</name>
        <dbReference type="ChEBI" id="CHEBI:30616"/>
    </ligand>
</feature>
<feature type="binding site" evidence="3">
    <location>
        <position position="362"/>
    </location>
    <ligand>
        <name>Mg(2+)</name>
        <dbReference type="ChEBI" id="CHEBI:18420"/>
        <label>1</label>
    </ligand>
</feature>
<feature type="binding site" evidence="1">
    <location>
        <position position="409"/>
    </location>
    <ligand>
        <name>ATP</name>
        <dbReference type="ChEBI" id="CHEBI:30616"/>
    </ligand>
</feature>
<feature type="binding site" evidence="1">
    <location>
        <position position="469"/>
    </location>
    <ligand>
        <name>ATP</name>
        <dbReference type="ChEBI" id="CHEBI:30616"/>
    </ligand>
</feature>
<feature type="binding site" evidence="3">
    <location>
        <position position="469"/>
    </location>
    <ligand>
        <name>Mg(2+)</name>
        <dbReference type="ChEBI" id="CHEBI:18420"/>
        <label>2</label>
    </ligand>
</feature>
<feature type="binding site" evidence="1">
    <location>
        <position position="474"/>
    </location>
    <ligand>
        <name>ATP</name>
        <dbReference type="ChEBI" id="CHEBI:30616"/>
    </ligand>
</feature>
<feature type="binding site" evidence="1">
    <location>
        <position position="492"/>
    </location>
    <ligand>
        <name>ATP</name>
        <dbReference type="ChEBI" id="CHEBI:30616"/>
    </ligand>
</feature>
<feature type="binding site" evidence="1">
    <location>
        <position position="494"/>
    </location>
    <ligand>
        <name>ATP</name>
        <dbReference type="ChEBI" id="CHEBI:30616"/>
    </ligand>
</feature>
<feature type="sequence conflict" description="In Ref. 2; CAA64457." evidence="9" ref="2">
    <original>VYYS</original>
    <variation>FIIV</variation>
    <location>
        <begin position="531"/>
        <end position="534"/>
    </location>
</feature>
<feature type="sequence conflict" description="In Ref. 2; CAA64457." evidence="9" ref="2">
    <original>T</original>
    <variation>R</variation>
    <location>
        <position position="698"/>
    </location>
</feature>
<name>DNLI4_CANAL</name>
<keyword id="KW-0067">ATP-binding</keyword>
<keyword id="KW-0227">DNA damage</keyword>
<keyword id="KW-0233">DNA recombination</keyword>
<keyword id="KW-0234">DNA repair</keyword>
<keyword id="KW-0436">Ligase</keyword>
<keyword id="KW-0460">Magnesium</keyword>
<keyword id="KW-0479">Metal-binding</keyword>
<keyword id="KW-0547">Nucleotide-binding</keyword>
<keyword id="KW-0539">Nucleus</keyword>
<keyword id="KW-1185">Reference proteome</keyword>
<keyword id="KW-0677">Repeat</keyword>
<organism>
    <name type="scientific">Candida albicans (strain SC5314 / ATCC MYA-2876)</name>
    <name type="common">Yeast</name>
    <dbReference type="NCBI Taxonomy" id="237561"/>
    <lineage>
        <taxon>Eukaryota</taxon>
        <taxon>Fungi</taxon>
        <taxon>Dikarya</taxon>
        <taxon>Ascomycota</taxon>
        <taxon>Saccharomycotina</taxon>
        <taxon>Pichiomycetes</taxon>
        <taxon>Debaryomycetaceae</taxon>
        <taxon>Candida/Lodderomyces clade</taxon>
        <taxon>Candida</taxon>
    </lineage>
</organism>
<dbReference type="EC" id="6.5.1.1" evidence="5"/>
<dbReference type="EMBL" id="X95001">
    <property type="protein sequence ID" value="CAA64457.2"/>
    <property type="molecule type" value="Genomic_DNA"/>
</dbReference>
<dbReference type="EMBL" id="CP017624">
    <property type="protein sequence ID" value="AOW27340.1"/>
    <property type="molecule type" value="Genomic_DNA"/>
</dbReference>
<dbReference type="RefSeq" id="XP_715339.2">
    <property type="nucleotide sequence ID" value="XM_710246.2"/>
</dbReference>
<dbReference type="SMR" id="P52496"/>
<dbReference type="FunCoup" id="P52496">
    <property type="interactions" value="603"/>
</dbReference>
<dbReference type="STRING" id="237561.P52496"/>
<dbReference type="EnsemblFungi" id="C2_03030W_A-T">
    <property type="protein sequence ID" value="C2_03030W_A-T-p1"/>
    <property type="gene ID" value="C2_03030W_A"/>
</dbReference>
<dbReference type="GeneID" id="3642986"/>
<dbReference type="KEGG" id="cal:CAALFM_C203030WA"/>
<dbReference type="CGD" id="CAL0000187710">
    <property type="gene designation" value="LIG4"/>
</dbReference>
<dbReference type="VEuPathDB" id="FungiDB:C2_03030W_A"/>
<dbReference type="eggNOG" id="KOG0966">
    <property type="taxonomic scope" value="Eukaryota"/>
</dbReference>
<dbReference type="HOGENOM" id="CLU_004844_1_1_1"/>
<dbReference type="InParanoid" id="P52496"/>
<dbReference type="OrthoDB" id="151490at2759"/>
<dbReference type="PHI-base" id="PHI:219"/>
<dbReference type="PRO" id="PR:P52496"/>
<dbReference type="Proteomes" id="UP000000559">
    <property type="component" value="Chromosome 2"/>
</dbReference>
<dbReference type="GO" id="GO:0032807">
    <property type="term" value="C:DNA ligase IV complex"/>
    <property type="evidence" value="ECO:0000318"/>
    <property type="project" value="GO_Central"/>
</dbReference>
<dbReference type="GO" id="GO:0005524">
    <property type="term" value="F:ATP binding"/>
    <property type="evidence" value="ECO:0000318"/>
    <property type="project" value="GO_Central"/>
</dbReference>
<dbReference type="GO" id="GO:0003677">
    <property type="term" value="F:DNA binding"/>
    <property type="evidence" value="ECO:0000318"/>
    <property type="project" value="GO_Central"/>
</dbReference>
<dbReference type="GO" id="GO:0003910">
    <property type="term" value="F:DNA ligase (ATP) activity"/>
    <property type="evidence" value="ECO:0000250"/>
    <property type="project" value="UniProtKB"/>
</dbReference>
<dbReference type="GO" id="GO:0003909">
    <property type="term" value="F:DNA ligase activity"/>
    <property type="evidence" value="ECO:0000316"/>
    <property type="project" value="CGD"/>
</dbReference>
<dbReference type="GO" id="GO:0046872">
    <property type="term" value="F:metal ion binding"/>
    <property type="evidence" value="ECO:0007669"/>
    <property type="project" value="UniProtKB-KW"/>
</dbReference>
<dbReference type="GO" id="GO:0071897">
    <property type="term" value="P:DNA biosynthetic process"/>
    <property type="evidence" value="ECO:0007669"/>
    <property type="project" value="InterPro"/>
</dbReference>
<dbReference type="GO" id="GO:0006310">
    <property type="term" value="P:DNA recombination"/>
    <property type="evidence" value="ECO:0007669"/>
    <property type="project" value="UniProtKB-KW"/>
</dbReference>
<dbReference type="GO" id="GO:0097680">
    <property type="term" value="P:double-strand break repair via classical nonhomologous end joining"/>
    <property type="evidence" value="ECO:0000250"/>
    <property type="project" value="UniProtKB"/>
</dbReference>
<dbReference type="GO" id="GO:0006303">
    <property type="term" value="P:double-strand break repair via nonhomologous end joining"/>
    <property type="evidence" value="ECO:0000318"/>
    <property type="project" value="GO_Central"/>
</dbReference>
<dbReference type="GO" id="GO:0030447">
    <property type="term" value="P:filamentous growth"/>
    <property type="evidence" value="ECO:0000315"/>
    <property type="project" value="CGD"/>
</dbReference>
<dbReference type="GO" id="GO:0044182">
    <property type="term" value="P:filamentous growth of a population of unicellular organisms"/>
    <property type="evidence" value="ECO:0000315"/>
    <property type="project" value="CGD"/>
</dbReference>
<dbReference type="GO" id="GO:0006297">
    <property type="term" value="P:nucleotide-excision repair, DNA gap filling"/>
    <property type="evidence" value="ECO:0000318"/>
    <property type="project" value="GO_Central"/>
</dbReference>
<dbReference type="CDD" id="cd07903">
    <property type="entry name" value="Adenylation_DNA_ligase_IV"/>
    <property type="match status" value="1"/>
</dbReference>
<dbReference type="CDD" id="cd17722">
    <property type="entry name" value="BRCT_DNA_ligase_IV_rpt1"/>
    <property type="match status" value="1"/>
</dbReference>
<dbReference type="CDD" id="cd07968">
    <property type="entry name" value="OBF_DNA_ligase_IV"/>
    <property type="match status" value="1"/>
</dbReference>
<dbReference type="FunFam" id="1.10.3260.10:FF:000019">
    <property type="entry name" value="DNA ligase"/>
    <property type="match status" value="1"/>
</dbReference>
<dbReference type="FunFam" id="3.30.470.30:FF:000021">
    <property type="entry name" value="DNA ligase"/>
    <property type="match status" value="1"/>
</dbReference>
<dbReference type="Gene3D" id="3.40.50.10190">
    <property type="entry name" value="BRCT domain"/>
    <property type="match status" value="1"/>
</dbReference>
<dbReference type="Gene3D" id="1.10.3260.10">
    <property type="entry name" value="DNA ligase, ATP-dependent, N-terminal domain"/>
    <property type="match status" value="1"/>
</dbReference>
<dbReference type="Gene3D" id="3.30.470.30">
    <property type="entry name" value="DNA ligase/mRNA capping enzyme"/>
    <property type="match status" value="1"/>
</dbReference>
<dbReference type="Gene3D" id="2.40.50.140">
    <property type="entry name" value="Nucleic acid-binding proteins"/>
    <property type="match status" value="1"/>
</dbReference>
<dbReference type="InterPro" id="IPR044125">
    <property type="entry name" value="Adenylation_DNA_ligase_IV"/>
</dbReference>
<dbReference type="InterPro" id="IPR001357">
    <property type="entry name" value="BRCT_dom"/>
</dbReference>
<dbReference type="InterPro" id="IPR036420">
    <property type="entry name" value="BRCT_dom_sf"/>
</dbReference>
<dbReference type="InterPro" id="IPR000977">
    <property type="entry name" value="DNA_ligase_ATP-dep"/>
</dbReference>
<dbReference type="InterPro" id="IPR012310">
    <property type="entry name" value="DNA_ligase_ATP-dep_cent"/>
</dbReference>
<dbReference type="InterPro" id="IPR016059">
    <property type="entry name" value="DNA_ligase_ATP-dep_CS"/>
</dbReference>
<dbReference type="InterPro" id="IPR012308">
    <property type="entry name" value="DNA_ligase_ATP-dep_N"/>
</dbReference>
<dbReference type="InterPro" id="IPR036599">
    <property type="entry name" value="DNA_ligase_N_sf"/>
</dbReference>
<dbReference type="InterPro" id="IPR029710">
    <property type="entry name" value="LIG4"/>
</dbReference>
<dbReference type="InterPro" id="IPR012340">
    <property type="entry name" value="NA-bd_OB-fold"/>
</dbReference>
<dbReference type="NCBIfam" id="TIGR00574">
    <property type="entry name" value="dnl1"/>
    <property type="match status" value="1"/>
</dbReference>
<dbReference type="PANTHER" id="PTHR45997">
    <property type="entry name" value="DNA LIGASE 4"/>
    <property type="match status" value="1"/>
</dbReference>
<dbReference type="PANTHER" id="PTHR45997:SF1">
    <property type="entry name" value="DNA LIGASE 4"/>
    <property type="match status" value="1"/>
</dbReference>
<dbReference type="Pfam" id="PF16589">
    <property type="entry name" value="BRCT_2"/>
    <property type="match status" value="1"/>
</dbReference>
<dbReference type="Pfam" id="PF01068">
    <property type="entry name" value="DNA_ligase_A_M"/>
    <property type="match status" value="1"/>
</dbReference>
<dbReference type="Pfam" id="PF04675">
    <property type="entry name" value="DNA_ligase_A_N"/>
    <property type="match status" value="1"/>
</dbReference>
<dbReference type="SMART" id="SM00292">
    <property type="entry name" value="BRCT"/>
    <property type="match status" value="2"/>
</dbReference>
<dbReference type="SUPFAM" id="SSF52113">
    <property type="entry name" value="BRCT domain"/>
    <property type="match status" value="1"/>
</dbReference>
<dbReference type="SUPFAM" id="SSF56091">
    <property type="entry name" value="DNA ligase/mRNA capping enzyme, catalytic domain"/>
    <property type="match status" value="1"/>
</dbReference>
<dbReference type="SUPFAM" id="SSF50249">
    <property type="entry name" value="Nucleic acid-binding proteins"/>
    <property type="match status" value="1"/>
</dbReference>
<dbReference type="PROSITE" id="PS50172">
    <property type="entry name" value="BRCT"/>
    <property type="match status" value="1"/>
</dbReference>
<dbReference type="PROSITE" id="PS00697">
    <property type="entry name" value="DNA_LIGASE_A1"/>
    <property type="match status" value="1"/>
</dbReference>
<dbReference type="PROSITE" id="PS00333">
    <property type="entry name" value="DNA_LIGASE_A2"/>
    <property type="match status" value="1"/>
</dbReference>
<dbReference type="PROSITE" id="PS50160">
    <property type="entry name" value="DNA_LIGASE_A3"/>
    <property type="match status" value="1"/>
</dbReference>
<protein>
    <recommendedName>
        <fullName>DNA ligase 4</fullName>
        <shortName>CaLIG4</shortName>
        <ecNumber evidence="5">6.5.1.1</ecNumber>
    </recommendedName>
    <alternativeName>
        <fullName>DNA ligase IV</fullName>
    </alternativeName>
    <alternativeName>
        <fullName>Polydeoxyribonucleotide synthase [ATP] 4</fullName>
    </alternativeName>
</protein>
<sequence>MTYFLNDIRPPSPNDITPSFTLLTKELFDKLDGVRKESLGDFRTVTEKKAFIIKTFINTFRTHIGNDIYPSAKLIFPEKSGRIYFIKEVALARLLIKMYKIPKESEDYITLHDWNKSYQRSRRFSIDEKKIRDLPLQASRIISKRRPIVDKLEEYTVPQINSSLDQLALEKVSQGQIDILKPLFDNLSIPEVRWLIHILLNKSILTSMERFFFNTWHPDGYRVFSICNDLQKTLQFSTNPDLRLDPSQLAIHPCFKFKPQLSERLTTSYKTLVKKLQRKHEMDPPYEKKFQELGLENKFYIEEKMDGDRMLLHKDGDSFKFFSRRLKDYSYLYGESFQFGALTKFLAHAFAGNIQSVILDGEMVAYDYERNVILPFGTLKSSAIQESVRQFTTIDQYEQQTAYPFFLVFDILFLNGKDLTNYPLFFRKNILNRILRPIPNRFEVLDTRLGSSSEDIERAIREVVSSRCEGLVLKNVQSKYEIDGFRNPDWIKVKPEYLEKFGENLDLVVIGKSPAIKNSYMCGLKSVTDGVYYSFCTCANGIEIEEFDKIERLTHGKWIKTDVSMPPESLIKFGTKIPTFWIHPSDSLVLEIRARSIDTRAGTSYAVGSTLHNNHCRKIREDKSIDECVTLQEYTHIKANYINDLNKAQTALGKKREPVYSLDNESKLKKVKVESDLFSGIEFLIMSDKREADGEVTTIEEMKAMVKQYGGKIVNSVDLATNYQIMVITERELPVSSQYLSKGIDLVKPIWIYECIKRGCVLQLEPYFIFASKNWDNFNHMVDQYGDSYIIHHPLNIVVPKLSESELEDLRNGFDWGDLKPWIYLFKGLSFYVCGNNLSARFLKERIERFSGDLSKHFIECCYIVIPDNHSRPLMLREIDKMSNQISREMVIDKNGGSSRIPHFVTEAFVQASIKMNYIPDPDDYKFR</sequence>
<comment type="function">
    <text evidence="6 7 8">DNA ligase involved in DNA non-homologous end joining (NHEJ); required for double-strand break (DSB) repair. Not required for the repair of DSBs induced by ionizing radiation or UV light. Has an important role in morphogenesis, positively affecting the capacity to form hyphae.</text>
</comment>
<comment type="catalytic activity">
    <reaction evidence="5">
        <text>ATP + (deoxyribonucleotide)n-3'-hydroxyl + 5'-phospho-(deoxyribonucleotide)m = (deoxyribonucleotide)n+m + AMP + diphosphate.</text>
        <dbReference type="EC" id="6.5.1.1"/>
    </reaction>
</comment>
<comment type="cofactor">
    <cofactor evidence="1">
        <name>Mg(2+)</name>
        <dbReference type="ChEBI" id="CHEBI:18420"/>
    </cofactor>
</comment>
<comment type="subcellular location">
    <subcellularLocation>
        <location evidence="2">Nucleus</location>
    </subcellularLocation>
</comment>
<comment type="induction">
    <text evidence="6">Cell cycle-regulated. Expression peaks in late G1 and during the morphological transition.</text>
</comment>
<comment type="similarity">
    <text evidence="9">Belongs to the ATP-dependent DNA ligase family.</text>
</comment>
<gene>
    <name type="primary">LIG4</name>
    <name type="synonym">CDC9</name>
    <name type="ordered locus">CAALFM_C203030WA</name>
    <name type="ORF">CaO19.13220</name>
    <name type="ORF">CaO19.5798</name>
</gene>
<accession>P52496</accession>
<accession>A0A1D8PGS3</accession>
<accession>Q5A0L3</accession>
<evidence type="ECO:0000250" key="1">
    <source>
        <dbReference type="UniProtKB" id="P49917"/>
    </source>
</evidence>
<evidence type="ECO:0000250" key="2">
    <source>
        <dbReference type="UniProtKB" id="Q08387"/>
    </source>
</evidence>
<evidence type="ECO:0000255" key="3"/>
<evidence type="ECO:0000255" key="4">
    <source>
        <dbReference type="PROSITE-ProRule" id="PRU00033"/>
    </source>
</evidence>
<evidence type="ECO:0000255" key="5">
    <source>
        <dbReference type="PROSITE-ProRule" id="PRU10135"/>
    </source>
</evidence>
<evidence type="ECO:0000269" key="6">
    <source>
    </source>
</evidence>
<evidence type="ECO:0000269" key="7">
    <source>
    </source>
</evidence>
<evidence type="ECO:0000269" key="8">
    <source>
    </source>
</evidence>
<evidence type="ECO:0000305" key="9"/>